<protein>
    <recommendedName>
        <fullName evidence="13">Inosine-5'-monophosphate dehydrogenase 2</fullName>
        <shortName>IMP dehydrogenase 2</shortName>
        <shortName>IMPD 2</shortName>
        <shortName>IMPDH 2</shortName>
        <ecNumber evidence="9 10">1.1.1.205</ecNumber>
    </recommendedName>
    <alternativeName>
        <fullName evidence="14">Inosine-5'-monophosphate dehydrogenase type II</fullName>
        <shortName>IMP dehydrogenase II</shortName>
        <shortName>IMPDH-II</shortName>
    </alternativeName>
</protein>
<keyword id="KW-0002">3D-structure</keyword>
<keyword id="KW-0007">Acetylation</keyword>
<keyword id="KW-0129">CBS domain</keyword>
<keyword id="KW-0963">Cytoplasm</keyword>
<keyword id="KW-0903">Direct protein sequencing</keyword>
<keyword id="KW-0238">DNA-binding</keyword>
<keyword id="KW-0332">GMP biosynthesis</keyword>
<keyword id="KW-1017">Isopeptide bond</keyword>
<keyword id="KW-0479">Metal-binding</keyword>
<keyword id="KW-0520">NAD</keyword>
<keyword id="KW-0539">Nucleus</keyword>
<keyword id="KW-0560">Oxidoreductase</keyword>
<keyword id="KW-0597">Phosphoprotein</keyword>
<keyword id="KW-0630">Potassium</keyword>
<keyword id="KW-1267">Proteomics identification</keyword>
<keyword id="KW-0658">Purine biosynthesis</keyword>
<keyword id="KW-1185">Reference proteome</keyword>
<keyword id="KW-0677">Repeat</keyword>
<keyword id="KW-0694">RNA-binding</keyword>
<keyword id="KW-0832">Ubl conjugation</keyword>
<comment type="function">
    <text evidence="3 9 10">Catalyzes the conversion of inosine 5'-phosphate (IMP) to xanthosine 5'-phosphate (XMP), the first committed and rate-limiting step in the de novo synthesis of guanine nucleotides, and therefore plays an important role in the regulation of cell growth (PubMed:7763314, PubMed:7903306). Could also have a single-stranded nucleic acid-binding activity and could play a role in RNA and/or DNA metabolism (PubMed:14766016). It may also have a role in the development of malignancy and the growth progression of some tumors.</text>
</comment>
<comment type="catalytic activity">
    <reaction evidence="9 10">
        <text>IMP + NAD(+) + H2O = XMP + NADH + H(+)</text>
        <dbReference type="Rhea" id="RHEA:11708"/>
        <dbReference type="ChEBI" id="CHEBI:15377"/>
        <dbReference type="ChEBI" id="CHEBI:15378"/>
        <dbReference type="ChEBI" id="CHEBI:57464"/>
        <dbReference type="ChEBI" id="CHEBI:57540"/>
        <dbReference type="ChEBI" id="CHEBI:57945"/>
        <dbReference type="ChEBI" id="CHEBI:58053"/>
        <dbReference type="EC" id="1.1.1.205"/>
    </reaction>
</comment>
<comment type="cofactor">
    <cofactor>
        <name>K(+)</name>
        <dbReference type="ChEBI" id="CHEBI:29103"/>
    </cofactor>
</comment>
<comment type="activity regulation">
    <text evidence="1 10">Mycophenolic acid (MPA) is a non-competitive inhibitor that prevents formation of the closed enzyme conformation by binding to the same site as the amobile flap. In contrast, mizoribine monophosphate (MZP) is a competitive inhibitor that induces the closed conformation. MPA is a potent inhibitor of mammalian IMPDHs but a poor inhibitor of the bacterial enzymes. MZP is a more potent inhibitor of bacterial IMPDH. Subject to product inhibition by XMP and NADH (PubMed:7903306). Also inhibited by ADP.</text>
</comment>
<comment type="biophysicochemical properties">
    <kinetics>
        <KM evidence="9 10">9.3 uM for Inosine 5'-phosphate</KM>
        <KM evidence="9 10">32 uM for NAD(+)</KM>
    </kinetics>
</comment>
<comment type="pathway">
    <text evidence="9 10">Purine metabolism; XMP biosynthesis via de novo pathway; XMP from IMP: step 1/1.</text>
</comment>
<comment type="subunit">
    <text evidence="6 7 10 11 12">Homotetramer (PubMed:7903306, Ref.28, Ref.29). Interacts with CLOCK; in a circadian manner (PubMed:28985504). Interacts with ANKRD9; leading to its ubiquitination and degradation by the proteasome (PubMed:30293565).</text>
</comment>
<comment type="interaction">
    <interactant intactId="EBI-353389">
        <id>P12268</id>
    </interactant>
    <interactant intactId="EBI-712648">
        <id>O95994</id>
        <label>AGR2</label>
    </interactant>
    <organismsDiffer>false</organismsDiffer>
    <experiments>3</experiments>
</comment>
<comment type="interaction">
    <interactant intactId="EBI-353389">
        <id>P12268</id>
    </interactant>
    <interactant intactId="EBI-359248">
        <id>Q96GX9</id>
        <label>APIP</label>
    </interactant>
    <organismsDiffer>false</organismsDiffer>
    <experiments>3</experiments>
</comment>
<comment type="interaction">
    <interactant intactId="EBI-353389">
        <id>P12268</id>
    </interactant>
    <interactant intactId="EBI-750332">
        <id>Q9BU20</id>
        <label>CPLANE2</label>
    </interactant>
    <organismsDiffer>false</organismsDiffer>
    <experiments>6</experiments>
</comment>
<comment type="interaction">
    <interactant intactId="EBI-353389">
        <id>P12268</id>
    </interactant>
    <interactant intactId="EBI-13318821">
        <id>Q8WWZ1</id>
        <label>IL1F10</label>
    </interactant>
    <organismsDiffer>false</organismsDiffer>
    <experiments>3</experiments>
</comment>
<comment type="interaction">
    <interactant intactId="EBI-353389">
        <id>P12268</id>
    </interactant>
    <interactant intactId="EBI-12188657">
        <id>P20839-3</id>
        <label>IMPDH1</label>
    </interactant>
    <organismsDiffer>false</organismsDiffer>
    <experiments>3</experiments>
</comment>
<comment type="interaction">
    <interactant intactId="EBI-353389">
        <id>P12268</id>
    </interactant>
    <interactant intactId="EBI-12029004">
        <id>P78424</id>
        <label>POU6F2</label>
    </interactant>
    <organismsDiffer>false</organismsDiffer>
    <experiments>3</experiments>
</comment>
<comment type="interaction">
    <interactant intactId="EBI-353389">
        <id>P12268</id>
    </interactant>
    <interactant intactId="EBI-518675">
        <id>P40763</id>
        <label>STAT3</label>
    </interactant>
    <organismsDiffer>false</organismsDiffer>
    <experiments>3</experiments>
</comment>
<comment type="interaction">
    <interactant intactId="EBI-353389">
        <id>P12268</id>
    </interactant>
    <interactant intactId="EBI-355744">
        <id>Q12933</id>
        <label>TRAF2</label>
    </interactant>
    <organismsDiffer>false</organismsDiffer>
    <experiments>3</experiments>
</comment>
<comment type="subcellular location">
    <subcellularLocation>
        <location evidence="3">Cytoplasm</location>
    </subcellularLocation>
    <subcellularLocation>
        <location evidence="3">Nucleus</location>
    </subcellularLocation>
    <subcellularLocation>
        <location evidence="8">Cytoplasm</location>
        <location evidence="8">Cytosol</location>
    </subcellularLocation>
    <text evidence="5 8">Can form fiber-like subcellular structures termed 'cytoophidia' in response to intracellular guanine-nucleotide depletion.</text>
</comment>
<comment type="tissue specificity">
    <text>IMPDH1 is the main species in normal leukocytes and IMPDH2 predominates over IMPDH1 in the tumor.</text>
</comment>
<comment type="induction">
    <text>Selectively up-regulated in neoplastic and replicating cells.</text>
</comment>
<comment type="PTM">
    <text evidence="7">Ubiquitinated leading to its degradation by the proteasome.</text>
</comment>
<comment type="PTM">
    <text>The N-terminus is blocked.</text>
</comment>
<comment type="PTM">
    <text evidence="6">Acetylated by CLOCK in a circadian manner (PubMed:28985504).</text>
</comment>
<comment type="polymorphism">
    <text evidence="4">Genetic variants in the IMPDH2 gene are responsible for the large inter-individual variability in enzyme activity and may influence immunosuppressive efficacy and side effects in transplant recipients receiving mycophenolic acid [MIM:617995].</text>
</comment>
<comment type="miscellaneous">
    <text>Because IMPDH activity is tightly linked with cell proliferation, it has been recognized as a target for cancer and viral chemotherapy and as a target for immunosuppressive drugs. The activities of the antitumor drug tiazofurin, the antiviral drug ribavirin, and the immunosuppressive drugs mizoribine and mycophenolic acid (MPA) are attributed to the inhibition of IMPDH. In addition, bacterial and parasitic IMPDH's differ significantly from mammalian enzymes, which makes it a suitable target for anti-infective drugs.</text>
</comment>
<comment type="similarity">
    <text evidence="1">Belongs to the IMPDH/GMPR family.</text>
</comment>
<name>IMDH2_HUMAN</name>
<evidence type="ECO:0000255" key="1">
    <source>
        <dbReference type="HAMAP-Rule" id="MF_03156"/>
    </source>
</evidence>
<evidence type="ECO:0000269" key="2">
    <source>
    </source>
</evidence>
<evidence type="ECO:0000269" key="3">
    <source>
    </source>
</evidence>
<evidence type="ECO:0000269" key="4">
    <source>
    </source>
</evidence>
<evidence type="ECO:0000269" key="5">
    <source>
    </source>
</evidence>
<evidence type="ECO:0000269" key="6">
    <source>
    </source>
</evidence>
<evidence type="ECO:0000269" key="7">
    <source>
    </source>
</evidence>
<evidence type="ECO:0000269" key="8">
    <source>
    </source>
</evidence>
<evidence type="ECO:0000269" key="9">
    <source>
    </source>
</evidence>
<evidence type="ECO:0000269" key="10">
    <source>
    </source>
</evidence>
<evidence type="ECO:0000269" key="11">
    <source ref="28"/>
</evidence>
<evidence type="ECO:0000269" key="12">
    <source ref="29"/>
</evidence>
<evidence type="ECO:0000303" key="13">
    <source>
    </source>
</evidence>
<evidence type="ECO:0000303" key="14">
    <source>
    </source>
</evidence>
<evidence type="ECO:0000305" key="15"/>
<evidence type="ECO:0000312" key="16">
    <source>
        <dbReference type="HGNC" id="HGNC:6053"/>
    </source>
</evidence>
<evidence type="ECO:0007744" key="17">
    <source>
    </source>
</evidence>
<evidence type="ECO:0007744" key="18">
    <source>
    </source>
</evidence>
<evidence type="ECO:0007744" key="19">
    <source>
    </source>
</evidence>
<evidence type="ECO:0007744" key="20">
    <source>
    </source>
</evidence>
<evidence type="ECO:0007744" key="21">
    <source>
    </source>
</evidence>
<evidence type="ECO:0007744" key="22">
    <source>
    </source>
</evidence>
<evidence type="ECO:0007744" key="23">
    <source>
    </source>
</evidence>
<evidence type="ECO:0007829" key="24">
    <source>
        <dbReference type="PDB" id="1B3O"/>
    </source>
</evidence>
<evidence type="ECO:0007829" key="25">
    <source>
        <dbReference type="PDB" id="1NF7"/>
    </source>
</evidence>
<evidence type="ECO:0007829" key="26">
    <source>
        <dbReference type="PDB" id="6I0M"/>
    </source>
</evidence>
<evidence type="ECO:0007829" key="27">
    <source>
        <dbReference type="PDB" id="6I0O"/>
    </source>
</evidence>
<evidence type="ECO:0007829" key="28">
    <source>
        <dbReference type="PDB" id="6U8E"/>
    </source>
</evidence>
<evidence type="ECO:0007829" key="29">
    <source>
        <dbReference type="PDB" id="8FOZ"/>
    </source>
</evidence>
<evidence type="ECO:0007829" key="30">
    <source>
        <dbReference type="PDB" id="8FUZ"/>
    </source>
</evidence>
<evidence type="ECO:0007829" key="31">
    <source>
        <dbReference type="PDB" id="8G8F"/>
    </source>
</evidence>
<dbReference type="EC" id="1.1.1.205" evidence="9 10"/>
<dbReference type="EMBL" id="J04208">
    <property type="protein sequence ID" value="AAA36112.1"/>
    <property type="molecule type" value="mRNA"/>
</dbReference>
<dbReference type="EMBL" id="L33842">
    <property type="protein sequence ID" value="AAA67054.1"/>
    <property type="molecule type" value="Genomic_DNA"/>
</dbReference>
<dbReference type="EMBL" id="L39210">
    <property type="protein sequence ID" value="AAB70699.1"/>
    <property type="molecule type" value="Genomic_DNA"/>
</dbReference>
<dbReference type="EMBL" id="BC006124">
    <property type="protein sequence ID" value="AAH06124.1"/>
    <property type="molecule type" value="mRNA"/>
</dbReference>
<dbReference type="EMBL" id="BC012840">
    <property type="protein sequence ID" value="AAH12840.1"/>
    <property type="molecule type" value="mRNA"/>
</dbReference>
<dbReference type="EMBL" id="BC015567">
    <property type="protein sequence ID" value="AAH15567.1"/>
    <property type="molecule type" value="mRNA"/>
</dbReference>
<dbReference type="EMBL" id="L08114">
    <property type="protein sequence ID" value="AAA36113.1"/>
    <property type="molecule type" value="Genomic_DNA"/>
</dbReference>
<dbReference type="CCDS" id="CCDS2786.1"/>
<dbReference type="PIR" id="I52303">
    <property type="entry name" value="A31997"/>
</dbReference>
<dbReference type="RefSeq" id="NP_000875.2">
    <property type="nucleotide sequence ID" value="NM_000884.3"/>
</dbReference>
<dbReference type="PDB" id="1B3O">
    <property type="method" value="X-ray"/>
    <property type="resolution" value="2.90 A"/>
    <property type="chains" value="A/B=1-514"/>
</dbReference>
<dbReference type="PDB" id="1NF7">
    <property type="method" value="X-ray"/>
    <property type="resolution" value="2.65 A"/>
    <property type="chains" value="A/B=1-514"/>
</dbReference>
<dbReference type="PDB" id="1NFB">
    <property type="method" value="X-ray"/>
    <property type="resolution" value="2.90 A"/>
    <property type="chains" value="A/B=1-514"/>
</dbReference>
<dbReference type="PDB" id="6I0M">
    <property type="method" value="X-ray"/>
    <property type="resolution" value="2.57 A"/>
    <property type="chains" value="A/B=1-514"/>
</dbReference>
<dbReference type="PDB" id="6I0O">
    <property type="method" value="X-ray"/>
    <property type="resolution" value="2.62 A"/>
    <property type="chains" value="A/B=1-514"/>
</dbReference>
<dbReference type="PDB" id="6U8E">
    <property type="method" value="EM"/>
    <property type="resolution" value="3.03 A"/>
    <property type="chains" value="A/B/C/D/E/F/G/H=1-514"/>
</dbReference>
<dbReference type="PDB" id="6U8N">
    <property type="method" value="EM"/>
    <property type="resolution" value="3.29 A"/>
    <property type="chains" value="A/B/C/D/E/F/G/H/I/J/K/L/M/N/O/P=1-514"/>
</dbReference>
<dbReference type="PDB" id="6U8R">
    <property type="method" value="EM"/>
    <property type="resolution" value="3.91 A"/>
    <property type="chains" value="A/B/C/D/E/F/G/H/I/J/K/L/M/N/O/P=1-514"/>
</dbReference>
<dbReference type="PDB" id="6U8S">
    <property type="method" value="EM"/>
    <property type="resolution" value="3.14 A"/>
    <property type="chains" value="A/B/C/D/E/F/G/H=1-514"/>
</dbReference>
<dbReference type="PDB" id="6U9O">
    <property type="method" value="EM"/>
    <property type="resolution" value="3.36 A"/>
    <property type="chains" value="A/B/C/D/E/F/G/H/I/J/K/L/M/N/O/P=1-514"/>
</dbReference>
<dbReference type="PDB" id="6UA2">
    <property type="method" value="EM"/>
    <property type="resolution" value="4.20 A"/>
    <property type="chains" value="A/B/C/D/E/F/G/H/I/J/K/L/M/N/O/P=1-514"/>
</dbReference>
<dbReference type="PDB" id="6UA4">
    <property type="method" value="EM"/>
    <property type="resolution" value="3.65 A"/>
    <property type="chains" value="A/B/C/D/E/F/G/H/I/J/K/L/M/N/O/P=1-514"/>
</dbReference>
<dbReference type="PDB" id="6UA5">
    <property type="method" value="EM"/>
    <property type="resolution" value="3.79 A"/>
    <property type="chains" value="A/B/C/D/E/F/G/H=1-514"/>
</dbReference>
<dbReference type="PDB" id="6UAJ">
    <property type="method" value="EM"/>
    <property type="resolution" value="3.84 A"/>
    <property type="chains" value="A/B/C/D/E/F/G/H=1-514"/>
</dbReference>
<dbReference type="PDB" id="6UC2">
    <property type="method" value="EM"/>
    <property type="resolution" value="4.48 A"/>
    <property type="chains" value="A/B/C/D/E/F/G/H=1-514"/>
</dbReference>
<dbReference type="PDB" id="6UDO">
    <property type="method" value="EM"/>
    <property type="resolution" value="3.21 A"/>
    <property type="chains" value="A/B/C/D/E/F/G/H/I/J/K/L/M/N/O/P=1-514"/>
</dbReference>
<dbReference type="PDB" id="6UDP">
    <property type="method" value="EM"/>
    <property type="resolution" value="2.95 A"/>
    <property type="chains" value="A/B/C/D/E/F/G/H=1-514"/>
</dbReference>
<dbReference type="PDB" id="6UDQ">
    <property type="method" value="EM"/>
    <property type="resolution" value="3.27 A"/>
    <property type="chains" value="A/B/C/D/E/F/G/H/I/J/K/L=1-514"/>
</dbReference>
<dbReference type="PDB" id="8FOZ">
    <property type="method" value="EM"/>
    <property type="resolution" value="2.00 A"/>
    <property type="chains" value="A/B/C/D/E/F/G/H=1-514"/>
</dbReference>
<dbReference type="PDB" id="8FUZ">
    <property type="method" value="EM"/>
    <property type="resolution" value="2.10 A"/>
    <property type="chains" value="A/B/C/D/E/F/G/H=1-514"/>
</dbReference>
<dbReference type="PDB" id="8G8F">
    <property type="method" value="EM"/>
    <property type="resolution" value="2.60 A"/>
    <property type="chains" value="A/B/C/D/E/F/G/H=1-514"/>
</dbReference>
<dbReference type="PDB" id="8G9B">
    <property type="method" value="EM"/>
    <property type="resolution" value="3.00 A"/>
    <property type="chains" value="A/B/C/D/E/F/G/H=1-514"/>
</dbReference>
<dbReference type="PDB" id="9DMU">
    <property type="method" value="EM"/>
    <property type="resolution" value="1.82 A"/>
    <property type="chains" value="A/B/C/D/E/F/G/H=1-514"/>
</dbReference>
<dbReference type="PDBsum" id="1B3O"/>
<dbReference type="PDBsum" id="1NF7"/>
<dbReference type="PDBsum" id="1NFB"/>
<dbReference type="PDBsum" id="6I0M"/>
<dbReference type="PDBsum" id="6I0O"/>
<dbReference type="PDBsum" id="6U8E"/>
<dbReference type="PDBsum" id="6U8N"/>
<dbReference type="PDBsum" id="6U8R"/>
<dbReference type="PDBsum" id="6U8S"/>
<dbReference type="PDBsum" id="6U9O"/>
<dbReference type="PDBsum" id="6UA2"/>
<dbReference type="PDBsum" id="6UA4"/>
<dbReference type="PDBsum" id="6UA5"/>
<dbReference type="PDBsum" id="6UAJ"/>
<dbReference type="PDBsum" id="6UC2"/>
<dbReference type="PDBsum" id="6UDO"/>
<dbReference type="PDBsum" id="6UDP"/>
<dbReference type="PDBsum" id="6UDQ"/>
<dbReference type="PDBsum" id="8FOZ"/>
<dbReference type="PDBsum" id="8FUZ"/>
<dbReference type="PDBsum" id="8G8F"/>
<dbReference type="PDBsum" id="8G9B"/>
<dbReference type="PDBsum" id="9DMU"/>
<dbReference type="EMDB" id="EMD-20687"/>
<dbReference type="EMDB" id="EMD-20688"/>
<dbReference type="EMDB" id="EMD-20690"/>
<dbReference type="EMDB" id="EMD-20691"/>
<dbReference type="EMDB" id="EMD-20701"/>
<dbReference type="EMDB" id="EMD-20704"/>
<dbReference type="EMDB" id="EMD-20705"/>
<dbReference type="EMDB" id="EMD-20706"/>
<dbReference type="EMDB" id="EMD-20707"/>
<dbReference type="EMDB" id="EMD-20725"/>
<dbReference type="EMDB" id="EMD-20741"/>
<dbReference type="EMDB" id="EMD-20742"/>
<dbReference type="EMDB" id="EMD-20743"/>
<dbReference type="EMDB" id="EMD-29357"/>
<dbReference type="EMDB" id="EMD-29482"/>
<dbReference type="EMDB" id="EMD-29848"/>
<dbReference type="EMDB" id="EMD-29863"/>
<dbReference type="EMDB" id="EMD-47016"/>
<dbReference type="SMR" id="P12268"/>
<dbReference type="BioGRID" id="109828">
    <property type="interactions" value="442"/>
</dbReference>
<dbReference type="CORUM" id="P12268"/>
<dbReference type="FunCoup" id="P12268">
    <property type="interactions" value="2302"/>
</dbReference>
<dbReference type="IntAct" id="P12268">
    <property type="interactions" value="102"/>
</dbReference>
<dbReference type="MINT" id="P12268"/>
<dbReference type="STRING" id="9606.ENSP00000321584"/>
<dbReference type="BindingDB" id="P12268"/>
<dbReference type="ChEMBL" id="CHEMBL2002"/>
<dbReference type="DrugBank" id="DB03948">
    <property type="generic name" value="6-Chloropurine Riboside, 5'-Monophosphate"/>
</dbReference>
<dbReference type="DrugBank" id="DB00993">
    <property type="generic name" value="Azathioprine"/>
</dbReference>
<dbReference type="DrugBank" id="DB04566">
    <property type="generic name" value="Inosinic Acid"/>
</dbReference>
<dbReference type="DrugBank" id="DB01033">
    <property type="generic name" value="Mercaptopurine"/>
</dbReference>
<dbReference type="DrugBank" id="DB00688">
    <property type="generic name" value="Mycophenolate mofetil"/>
</dbReference>
<dbReference type="DrugBank" id="DB01024">
    <property type="generic name" value="Mycophenolic acid"/>
</dbReference>
<dbReference type="DrugBank" id="DB00157">
    <property type="generic name" value="NADH"/>
</dbReference>
<dbReference type="DrugBank" id="DB14128">
    <property type="generic name" value="Nadide"/>
</dbReference>
<dbReference type="DrugBank" id="DB00811">
    <property type="generic name" value="Ribavirin"/>
</dbReference>
<dbReference type="DrugBank" id="DB03070">
    <property type="generic name" value="Selenazole-4-carboxyamide-adenine dinucleotide"/>
</dbReference>
<dbReference type="DrugBank" id="DB06103">
    <property type="generic name" value="VX-148"/>
</dbReference>
<dbReference type="DrugCentral" id="P12268"/>
<dbReference type="GuidetoPHARMACOLOGY" id="2625"/>
<dbReference type="GlyCosmos" id="P12268">
    <property type="glycosylation" value="1 site, 1 glycan"/>
</dbReference>
<dbReference type="GlyGen" id="P12268">
    <property type="glycosylation" value="1 site, 1 O-linked glycan (1 site)"/>
</dbReference>
<dbReference type="iPTMnet" id="P12268"/>
<dbReference type="MetOSite" id="P12268"/>
<dbReference type="PhosphoSitePlus" id="P12268"/>
<dbReference type="SwissPalm" id="P12268"/>
<dbReference type="BioMuta" id="IMPDH2"/>
<dbReference type="DMDM" id="124419"/>
<dbReference type="REPRODUCTION-2DPAGE" id="IPI00291510"/>
<dbReference type="REPRODUCTION-2DPAGE" id="P12268"/>
<dbReference type="jPOST" id="P12268"/>
<dbReference type="MassIVE" id="P12268"/>
<dbReference type="PaxDb" id="9606-ENSP00000321584"/>
<dbReference type="PeptideAtlas" id="P12268"/>
<dbReference type="ProteomicsDB" id="52839"/>
<dbReference type="Pumba" id="P12268"/>
<dbReference type="TopDownProteomics" id="P12268"/>
<dbReference type="Antibodypedia" id="30367">
    <property type="antibodies" value="398 antibodies from 38 providers"/>
</dbReference>
<dbReference type="DNASU" id="3615"/>
<dbReference type="Ensembl" id="ENST00000326739.9">
    <property type="protein sequence ID" value="ENSP00000321584.4"/>
    <property type="gene ID" value="ENSG00000178035.13"/>
</dbReference>
<dbReference type="GeneID" id="3615"/>
<dbReference type="KEGG" id="hsa:3615"/>
<dbReference type="MANE-Select" id="ENST00000326739.9">
    <property type="protein sequence ID" value="ENSP00000321584.4"/>
    <property type="RefSeq nucleotide sequence ID" value="NM_000884.3"/>
    <property type="RefSeq protein sequence ID" value="NP_000875.2"/>
</dbReference>
<dbReference type="UCSC" id="uc003cvt.4">
    <property type="organism name" value="human"/>
</dbReference>
<dbReference type="AGR" id="HGNC:6053"/>
<dbReference type="CTD" id="3615"/>
<dbReference type="DisGeNET" id="3615"/>
<dbReference type="GeneCards" id="IMPDH2"/>
<dbReference type="HGNC" id="HGNC:6053">
    <property type="gene designation" value="IMPDH2"/>
</dbReference>
<dbReference type="HPA" id="ENSG00000178035">
    <property type="expression patterns" value="Low tissue specificity"/>
</dbReference>
<dbReference type="MalaCards" id="IMPDH2"/>
<dbReference type="MIM" id="146691">
    <property type="type" value="gene"/>
</dbReference>
<dbReference type="MIM" id="617995">
    <property type="type" value="phenotype"/>
</dbReference>
<dbReference type="neXtProt" id="NX_P12268"/>
<dbReference type="OpenTargets" id="ENSG00000178035"/>
<dbReference type="Orphanet" id="98808">
    <property type="disease" value="Autosomal dominant dopa-responsive dystonia"/>
</dbReference>
<dbReference type="PharmGKB" id="PA29863"/>
<dbReference type="VEuPathDB" id="HostDB:ENSG00000178035"/>
<dbReference type="eggNOG" id="KOG2550">
    <property type="taxonomic scope" value="Eukaryota"/>
</dbReference>
<dbReference type="GeneTree" id="ENSGT00940000157726"/>
<dbReference type="InParanoid" id="P12268"/>
<dbReference type="OrthoDB" id="416622at2759"/>
<dbReference type="PAN-GO" id="P12268">
    <property type="GO annotations" value="3 GO annotations based on evolutionary models"/>
</dbReference>
<dbReference type="PhylomeDB" id="P12268"/>
<dbReference type="TreeFam" id="TF300378"/>
<dbReference type="BioCyc" id="MetaCyc:HS11242-MONOMER"/>
<dbReference type="BRENDA" id="1.1.1.205">
    <property type="organism ID" value="2681"/>
</dbReference>
<dbReference type="PathwayCommons" id="P12268"/>
<dbReference type="Reactome" id="R-HSA-6798695">
    <property type="pathway name" value="Neutrophil degranulation"/>
</dbReference>
<dbReference type="Reactome" id="R-HSA-73817">
    <property type="pathway name" value="Purine ribonucleoside monophosphate biosynthesis"/>
</dbReference>
<dbReference type="Reactome" id="R-HSA-9679191">
    <property type="pathway name" value="Potential therapeutics for SARS"/>
</dbReference>
<dbReference type="Reactome" id="R-HSA-9748787">
    <property type="pathway name" value="Azathioprine ADME"/>
</dbReference>
<dbReference type="SABIO-RK" id="P12268"/>
<dbReference type="SignaLink" id="P12268"/>
<dbReference type="SIGNOR" id="P12268"/>
<dbReference type="UniPathway" id="UPA00601">
    <property type="reaction ID" value="UER00295"/>
</dbReference>
<dbReference type="BioGRID-ORCS" id="3615">
    <property type="hits" value="396 hits in 1197 CRISPR screens"/>
</dbReference>
<dbReference type="ChiTaRS" id="IMPDH2">
    <property type="organism name" value="human"/>
</dbReference>
<dbReference type="EvolutionaryTrace" id="P12268"/>
<dbReference type="GeneWiki" id="IMPDH2"/>
<dbReference type="GenomeRNAi" id="3615"/>
<dbReference type="Pharos" id="P12268">
    <property type="development level" value="Tclin"/>
</dbReference>
<dbReference type="PRO" id="PR:P12268"/>
<dbReference type="Proteomes" id="UP000005640">
    <property type="component" value="Chromosome 3"/>
</dbReference>
<dbReference type="RNAct" id="P12268">
    <property type="molecule type" value="protein"/>
</dbReference>
<dbReference type="Bgee" id="ENSG00000178035">
    <property type="expression patterns" value="Expressed in left ovary and 213 other cell types or tissues"/>
</dbReference>
<dbReference type="ExpressionAtlas" id="P12268">
    <property type="expression patterns" value="baseline and differential"/>
</dbReference>
<dbReference type="GO" id="GO:0005737">
    <property type="term" value="C:cytoplasm"/>
    <property type="evidence" value="ECO:0000314"/>
    <property type="project" value="UniProtKB"/>
</dbReference>
<dbReference type="GO" id="GO:0005829">
    <property type="term" value="C:cytosol"/>
    <property type="evidence" value="ECO:0000314"/>
    <property type="project" value="UniProtKB"/>
</dbReference>
<dbReference type="GO" id="GO:0070062">
    <property type="term" value="C:extracellular exosome"/>
    <property type="evidence" value="ECO:0007005"/>
    <property type="project" value="UniProtKB"/>
</dbReference>
<dbReference type="GO" id="GO:0005576">
    <property type="term" value="C:extracellular region"/>
    <property type="evidence" value="ECO:0000304"/>
    <property type="project" value="Reactome"/>
</dbReference>
<dbReference type="GO" id="GO:1904813">
    <property type="term" value="C:ficolin-1-rich granule lumen"/>
    <property type="evidence" value="ECO:0000304"/>
    <property type="project" value="Reactome"/>
</dbReference>
<dbReference type="GO" id="GO:0016020">
    <property type="term" value="C:membrane"/>
    <property type="evidence" value="ECO:0007005"/>
    <property type="project" value="UniProtKB"/>
</dbReference>
<dbReference type="GO" id="GO:0005634">
    <property type="term" value="C:nucleus"/>
    <property type="evidence" value="ECO:0000314"/>
    <property type="project" value="UniProtKB"/>
</dbReference>
<dbReference type="GO" id="GO:0005778">
    <property type="term" value="C:peroxisomal membrane"/>
    <property type="evidence" value="ECO:0007005"/>
    <property type="project" value="UniProtKB"/>
</dbReference>
<dbReference type="GO" id="GO:0034774">
    <property type="term" value="C:secretory granule lumen"/>
    <property type="evidence" value="ECO:0000304"/>
    <property type="project" value="Reactome"/>
</dbReference>
<dbReference type="GO" id="GO:0003677">
    <property type="term" value="F:DNA binding"/>
    <property type="evidence" value="ECO:0007669"/>
    <property type="project" value="UniProtKB-KW"/>
</dbReference>
<dbReference type="GO" id="GO:0003938">
    <property type="term" value="F:IMP dehydrogenase activity"/>
    <property type="evidence" value="ECO:0000314"/>
    <property type="project" value="UniProtKB"/>
</dbReference>
<dbReference type="GO" id="GO:0046872">
    <property type="term" value="F:metal ion binding"/>
    <property type="evidence" value="ECO:0007669"/>
    <property type="project" value="UniProtKB-UniRule"/>
</dbReference>
<dbReference type="GO" id="GO:0000166">
    <property type="term" value="F:nucleotide binding"/>
    <property type="evidence" value="ECO:0000314"/>
    <property type="project" value="UniProtKB"/>
</dbReference>
<dbReference type="GO" id="GO:0003723">
    <property type="term" value="F:RNA binding"/>
    <property type="evidence" value="ECO:0007669"/>
    <property type="project" value="UniProtKB-KW"/>
</dbReference>
<dbReference type="GO" id="GO:0097294">
    <property type="term" value="P:'de novo' XMP biosynthetic process"/>
    <property type="evidence" value="ECO:0007669"/>
    <property type="project" value="Ensembl"/>
</dbReference>
<dbReference type="GO" id="GO:0071353">
    <property type="term" value="P:cellular response to interleukin-4"/>
    <property type="evidence" value="ECO:0007669"/>
    <property type="project" value="Ensembl"/>
</dbReference>
<dbReference type="GO" id="GO:0007623">
    <property type="term" value="P:circadian rhythm"/>
    <property type="evidence" value="ECO:0000314"/>
    <property type="project" value="UniProtKB"/>
</dbReference>
<dbReference type="GO" id="GO:0006177">
    <property type="term" value="P:GMP biosynthetic process"/>
    <property type="evidence" value="ECO:0007669"/>
    <property type="project" value="UniProtKB-UniRule"/>
</dbReference>
<dbReference type="GO" id="GO:0006183">
    <property type="term" value="P:GTP biosynthetic process"/>
    <property type="evidence" value="ECO:0000314"/>
    <property type="project" value="UniProtKB"/>
</dbReference>
<dbReference type="GO" id="GO:0046651">
    <property type="term" value="P:lymphocyte proliferation"/>
    <property type="evidence" value="ECO:0007669"/>
    <property type="project" value="Ensembl"/>
</dbReference>
<dbReference type="CDD" id="cd04601">
    <property type="entry name" value="CBS_pair_IMPDH"/>
    <property type="match status" value="1"/>
</dbReference>
<dbReference type="CDD" id="cd00381">
    <property type="entry name" value="IMPDH"/>
    <property type="match status" value="1"/>
</dbReference>
<dbReference type="FunFam" id="3.20.20.70:FF:000424">
    <property type="entry name" value="Inosine-5'-monophosphate dehydrogenase 2"/>
    <property type="match status" value="2"/>
</dbReference>
<dbReference type="Gene3D" id="3.20.20.70">
    <property type="entry name" value="Aldolase class I"/>
    <property type="match status" value="1"/>
</dbReference>
<dbReference type="HAMAP" id="MF_01964">
    <property type="entry name" value="IMPDH"/>
    <property type="match status" value="1"/>
</dbReference>
<dbReference type="InterPro" id="IPR013785">
    <property type="entry name" value="Aldolase_TIM"/>
</dbReference>
<dbReference type="InterPro" id="IPR000644">
    <property type="entry name" value="CBS_dom"/>
</dbReference>
<dbReference type="InterPro" id="IPR005990">
    <property type="entry name" value="IMP_DH"/>
</dbReference>
<dbReference type="InterPro" id="IPR015875">
    <property type="entry name" value="IMP_DH/GMP_Rdtase_CS"/>
</dbReference>
<dbReference type="InterPro" id="IPR001093">
    <property type="entry name" value="IMP_DH_GMPRt"/>
</dbReference>
<dbReference type="NCBIfam" id="TIGR01302">
    <property type="entry name" value="IMP_dehydrog"/>
    <property type="match status" value="1"/>
</dbReference>
<dbReference type="PANTHER" id="PTHR11911:SF121">
    <property type="entry name" value="INOSINE-5'-MONOPHOSPHATE DEHYDROGENASE 2"/>
    <property type="match status" value="1"/>
</dbReference>
<dbReference type="PANTHER" id="PTHR11911">
    <property type="entry name" value="INOSINE-5-MONOPHOSPHATE DEHYDROGENASE RELATED"/>
    <property type="match status" value="1"/>
</dbReference>
<dbReference type="Pfam" id="PF00571">
    <property type="entry name" value="CBS"/>
    <property type="match status" value="2"/>
</dbReference>
<dbReference type="Pfam" id="PF00478">
    <property type="entry name" value="IMPDH"/>
    <property type="match status" value="1"/>
</dbReference>
<dbReference type="PIRSF" id="PIRSF000130">
    <property type="entry name" value="IMPDH"/>
    <property type="match status" value="1"/>
</dbReference>
<dbReference type="SMART" id="SM00116">
    <property type="entry name" value="CBS"/>
    <property type="match status" value="2"/>
</dbReference>
<dbReference type="SMART" id="SM01240">
    <property type="entry name" value="IMPDH"/>
    <property type="match status" value="1"/>
</dbReference>
<dbReference type="SUPFAM" id="SSF51412">
    <property type="entry name" value="Inosine monophosphate dehydrogenase (IMPDH)"/>
    <property type="match status" value="2"/>
</dbReference>
<dbReference type="PROSITE" id="PS51371">
    <property type="entry name" value="CBS"/>
    <property type="match status" value="2"/>
</dbReference>
<dbReference type="PROSITE" id="PS00487">
    <property type="entry name" value="IMP_DH_GMP_RED"/>
    <property type="match status" value="1"/>
</dbReference>
<feature type="initiator methionine" description="Removed" evidence="1 10">
    <location>
        <position position="1"/>
    </location>
</feature>
<feature type="chain" id="PRO_0000093673" description="Inosine-5'-monophosphate dehydrogenase 2">
    <location>
        <begin position="2"/>
        <end position="514"/>
    </location>
</feature>
<feature type="domain" description="CBS 1" evidence="1">
    <location>
        <begin position="114"/>
        <end position="173"/>
    </location>
</feature>
<feature type="domain" description="CBS 2" evidence="1">
    <location>
        <begin position="179"/>
        <end position="237"/>
    </location>
</feature>
<feature type="active site" description="Thioimidate intermediate" evidence="1 2">
    <location>
        <position position="331"/>
    </location>
</feature>
<feature type="active site" description="Proton acceptor" evidence="1">
    <location>
        <position position="429"/>
    </location>
</feature>
<feature type="binding site">
    <location>
        <begin position="274"/>
        <end position="276"/>
    </location>
    <ligand>
        <name>NAD(+)</name>
        <dbReference type="ChEBI" id="CHEBI:57540"/>
    </ligand>
</feature>
<feature type="binding site" evidence="1">
    <location>
        <begin position="324"/>
        <end position="326"/>
    </location>
    <ligand>
        <name>NAD(+)</name>
        <dbReference type="ChEBI" id="CHEBI:57540"/>
    </ligand>
</feature>
<feature type="binding site" description="in other chain" evidence="1 11">
    <location>
        <position position="326"/>
    </location>
    <ligand>
        <name>K(+)</name>
        <dbReference type="ChEBI" id="CHEBI:29103"/>
        <note>ligand shared between two tetrameric partners</note>
    </ligand>
</feature>
<feature type="binding site" description="in other chain" evidence="1 11">
    <location>
        <position position="328"/>
    </location>
    <ligand>
        <name>K(+)</name>
        <dbReference type="ChEBI" id="CHEBI:29103"/>
        <note>ligand shared between two tetrameric partners</note>
    </ligand>
</feature>
<feature type="binding site" evidence="1">
    <location>
        <position position="329"/>
    </location>
    <ligand>
        <name>IMP</name>
        <dbReference type="ChEBI" id="CHEBI:58053"/>
    </ligand>
</feature>
<feature type="binding site" description="in other chain" evidence="1 11">
    <location>
        <position position="331"/>
    </location>
    <ligand>
        <name>K(+)</name>
        <dbReference type="ChEBI" id="CHEBI:29103"/>
        <note>ligand shared between two tetrameric partners</note>
    </ligand>
</feature>
<feature type="binding site">
    <location>
        <begin position="364"/>
        <end position="366"/>
    </location>
    <ligand>
        <name>IMP</name>
        <dbReference type="ChEBI" id="CHEBI:58053"/>
    </ligand>
</feature>
<feature type="binding site">
    <location>
        <begin position="387"/>
        <end position="388"/>
    </location>
    <ligand>
        <name>IMP</name>
        <dbReference type="ChEBI" id="CHEBI:58053"/>
    </ligand>
</feature>
<feature type="binding site" evidence="1">
    <location>
        <begin position="411"/>
        <end position="415"/>
    </location>
    <ligand>
        <name>IMP</name>
        <dbReference type="ChEBI" id="CHEBI:58053"/>
    </ligand>
</feature>
<feature type="binding site" evidence="1">
    <location>
        <position position="441"/>
    </location>
    <ligand>
        <name>IMP</name>
        <dbReference type="ChEBI" id="CHEBI:58053"/>
    </ligand>
</feature>
<feature type="binding site" evidence="1">
    <location>
        <position position="500"/>
    </location>
    <ligand>
        <name>K(+)</name>
        <dbReference type="ChEBI" id="CHEBI:29103"/>
        <note>ligand shared between two tetrameric partners</note>
    </ligand>
</feature>
<feature type="binding site" evidence="1">
    <location>
        <position position="501"/>
    </location>
    <ligand>
        <name>K(+)</name>
        <dbReference type="ChEBI" id="CHEBI:29103"/>
        <note>ligand shared between two tetrameric partners</note>
    </ligand>
</feature>
<feature type="binding site" evidence="1">
    <location>
        <position position="502"/>
    </location>
    <ligand>
        <name>K(+)</name>
        <dbReference type="ChEBI" id="CHEBI:29103"/>
        <note>ligand shared between two tetrameric partners</note>
    </ligand>
</feature>
<feature type="modified residue" description="Phosphoserine" evidence="18 20 21">
    <location>
        <position position="122"/>
    </location>
</feature>
<feature type="modified residue" description="Phosphoserine" evidence="21">
    <location>
        <position position="160"/>
    </location>
</feature>
<feature type="modified residue" description="Phosphotyrosine" evidence="17">
    <location>
        <position position="400"/>
    </location>
</feature>
<feature type="modified residue" description="Phosphoserine" evidence="20 21 22">
    <location>
        <position position="416"/>
    </location>
</feature>
<feature type="modified residue" description="N6-acetyllysine" evidence="19">
    <location>
        <position position="511"/>
    </location>
</feature>
<feature type="cross-link" description="Glycyl lysine isopeptide (Lys-Gly) (interchain with G-Cter in SUMO2)" evidence="23">
    <location>
        <position position="195"/>
    </location>
</feature>
<feature type="cross-link" description="Glycyl lysine isopeptide (Lys-Gly) (interchain with G-Cter in SUMO2)" evidence="23">
    <location>
        <position position="208"/>
    </location>
</feature>
<feature type="cross-link" description="Glycyl lysine isopeptide (Lys-Gly) (interchain with G-Cter in SUMO2)" evidence="23">
    <location>
        <position position="438"/>
    </location>
</feature>
<feature type="sequence variant" id="VAR_070542" description="Results in 10-fold decrease of enzymatic activity; dbSNP:rs121434586." evidence="4">
    <original>L</original>
    <variation>F</variation>
    <location>
        <position position="263"/>
    </location>
</feature>
<feature type="sequence conflict" description="In Ref. 1; AAA36112." evidence="15" ref="1">
    <original>AG</original>
    <variation>RS</variation>
    <location>
        <begin position="190"/>
        <end position="191"/>
    </location>
</feature>
<feature type="helix" evidence="29">
    <location>
        <begin position="2"/>
        <end position="5"/>
    </location>
</feature>
<feature type="turn" evidence="30">
    <location>
        <begin position="6"/>
        <end position="9"/>
    </location>
</feature>
<feature type="strand" evidence="24">
    <location>
        <begin position="17"/>
        <end position="19"/>
    </location>
</feature>
<feature type="helix" evidence="29">
    <location>
        <begin position="20"/>
        <end position="23"/>
    </location>
</feature>
<feature type="strand" evidence="26">
    <location>
        <begin position="25"/>
        <end position="28"/>
    </location>
</feature>
<feature type="helix" evidence="29">
    <location>
        <begin position="32"/>
        <end position="34"/>
    </location>
</feature>
<feature type="strand" evidence="29">
    <location>
        <begin position="35"/>
        <end position="37"/>
    </location>
</feature>
<feature type="helix" evidence="29">
    <location>
        <begin position="46"/>
        <end position="48"/>
    </location>
</feature>
<feature type="strand" evidence="29">
    <location>
        <begin position="53"/>
        <end position="58"/>
    </location>
</feature>
<feature type="strand" evidence="29">
    <location>
        <begin position="60"/>
        <end position="67"/>
    </location>
</feature>
<feature type="turn" evidence="29">
    <location>
        <begin position="71"/>
        <end position="73"/>
    </location>
</feature>
<feature type="helix" evidence="29">
    <location>
        <begin position="76"/>
        <end position="84"/>
    </location>
</feature>
<feature type="strand" evidence="29">
    <location>
        <begin position="88"/>
        <end position="91"/>
    </location>
</feature>
<feature type="strand" evidence="28">
    <location>
        <begin position="93"/>
        <end position="95"/>
    </location>
</feature>
<feature type="helix" evidence="29">
    <location>
        <begin position="97"/>
        <end position="109"/>
    </location>
</feature>
<feature type="strand" evidence="26">
    <location>
        <begin position="113"/>
        <end position="117"/>
    </location>
</feature>
<feature type="strand" evidence="24">
    <location>
        <begin position="123"/>
        <end position="125"/>
    </location>
</feature>
<feature type="helix" evidence="26">
    <location>
        <begin position="127"/>
        <end position="136"/>
    </location>
</feature>
<feature type="strand" evidence="26">
    <location>
        <begin position="142"/>
        <end position="145"/>
    </location>
</feature>
<feature type="strand" evidence="26">
    <location>
        <begin position="148"/>
        <end position="158"/>
    </location>
</feature>
<feature type="turn" evidence="26">
    <location>
        <begin position="160"/>
        <end position="162"/>
    </location>
</feature>
<feature type="strand" evidence="26">
    <location>
        <begin position="163"/>
        <end position="165"/>
    </location>
</feature>
<feature type="helix" evidence="27">
    <location>
        <begin position="167"/>
        <end position="170"/>
    </location>
</feature>
<feature type="helix" evidence="26">
    <location>
        <begin position="175"/>
        <end position="177"/>
    </location>
</feature>
<feature type="strand" evidence="26">
    <location>
        <begin position="179"/>
        <end position="181"/>
    </location>
</feature>
<feature type="turn" evidence="26">
    <location>
        <begin position="182"/>
        <end position="184"/>
    </location>
</feature>
<feature type="strand" evidence="31">
    <location>
        <begin position="188"/>
        <end position="191"/>
    </location>
</feature>
<feature type="helix" evidence="26">
    <location>
        <begin position="194"/>
        <end position="204"/>
    </location>
</feature>
<feature type="strand" evidence="26">
    <location>
        <begin position="206"/>
        <end position="212"/>
    </location>
</feature>
<feature type="strand" evidence="25">
    <location>
        <begin position="214"/>
        <end position="216"/>
    </location>
</feature>
<feature type="strand" evidence="26">
    <location>
        <begin position="217"/>
        <end position="223"/>
    </location>
</feature>
<feature type="helix" evidence="26">
    <location>
        <begin position="224"/>
        <end position="232"/>
    </location>
</feature>
<feature type="strand" evidence="29">
    <location>
        <begin position="247"/>
        <end position="250"/>
    </location>
</feature>
<feature type="strand" evidence="31">
    <location>
        <begin position="252"/>
        <end position="254"/>
    </location>
</feature>
<feature type="helix" evidence="29">
    <location>
        <begin position="255"/>
        <end position="266"/>
    </location>
</feature>
<feature type="strand" evidence="29">
    <location>
        <begin position="269"/>
        <end position="273"/>
    </location>
</feature>
<feature type="helix" evidence="29">
    <location>
        <begin position="281"/>
        <end position="293"/>
    </location>
</feature>
<feature type="strand" evidence="29">
    <location>
        <begin position="298"/>
        <end position="304"/>
    </location>
</feature>
<feature type="helix" evidence="29">
    <location>
        <begin position="307"/>
        <end position="316"/>
    </location>
</feature>
<feature type="strand" evidence="29">
    <location>
        <begin position="319"/>
        <end position="323"/>
    </location>
</feature>
<feature type="strand" evidence="26">
    <location>
        <begin position="325"/>
        <end position="327"/>
    </location>
</feature>
<feature type="strand" evidence="25">
    <location>
        <begin position="328"/>
        <end position="331"/>
    </location>
</feature>
<feature type="helix" evidence="29">
    <location>
        <begin position="333"/>
        <end position="337"/>
    </location>
</feature>
<feature type="helix" evidence="29">
    <location>
        <begin position="343"/>
        <end position="355"/>
    </location>
</feature>
<feature type="turn" evidence="29">
    <location>
        <begin position="356"/>
        <end position="358"/>
    </location>
</feature>
<feature type="strand" evidence="29">
    <location>
        <begin position="361"/>
        <end position="365"/>
    </location>
</feature>
<feature type="helix" evidence="29">
    <location>
        <begin position="370"/>
        <end position="378"/>
    </location>
</feature>
<feature type="strand" evidence="29">
    <location>
        <begin position="382"/>
        <end position="387"/>
    </location>
</feature>
<feature type="turn" evidence="29">
    <location>
        <begin position="388"/>
        <end position="392"/>
    </location>
</feature>
<feature type="strand" evidence="29">
    <location>
        <begin position="396"/>
        <end position="398"/>
    </location>
</feature>
<feature type="strand" evidence="29">
    <location>
        <begin position="401"/>
        <end position="403"/>
    </location>
</feature>
<feature type="strand" evidence="29">
    <location>
        <begin position="406"/>
        <end position="412"/>
    </location>
</feature>
<feature type="helix" evidence="29">
    <location>
        <begin position="417"/>
        <end position="420"/>
    </location>
</feature>
<feature type="strand" evidence="29">
    <location>
        <begin position="444"/>
        <end position="448"/>
    </location>
</feature>
<feature type="helix" evidence="29">
    <location>
        <begin position="453"/>
        <end position="471"/>
    </location>
</feature>
<feature type="helix" evidence="29">
    <location>
        <begin position="476"/>
        <end position="484"/>
    </location>
</feature>
<feature type="strand" evidence="29">
    <location>
        <begin position="490"/>
        <end position="492"/>
    </location>
</feature>
<feature type="helix" evidence="29">
    <location>
        <begin position="495"/>
        <end position="501"/>
    </location>
</feature>
<feature type="strand" evidence="29">
    <location>
        <begin position="507"/>
        <end position="510"/>
    </location>
</feature>
<accession>P12268</accession>
<accession>Q6LEF3</accession>
<proteinExistence type="evidence at protein level"/>
<sequence>MADYLISGGTSYVPDDGLTAQQLFNCGDGLTYNDFLILPGYIDFTADQVDLTSALTKKITLKTPLVSSPMDTVTEAGMAIAMALTGGIGFIHHNCTPEFQANEVRKVKKYEQGFITDPVVLSPKDRVRDVFEAKARHGFCGIPITDTGRMGSRLVGIISSRDIDFLKEEEHDCFLEEIMTKREDLVVAPAGITLKEANEILQRSKKGKLPIVNEDDELVAIIARTDLKKNRDYPLASKDAKKQLLCGAAIGTHEDDKYRLDLLAQAGVDVVVLDSSQGNSIFQINMIKYIKDKYPNLQVIGGNVVTAAQAKNLIDAGVDALRVGMGSGSICITQEVLACGRPQATAVYKVSEYARRFGVPVIADGGIQNVGHIAKALALGASTVMMGSLLAATTEAPGEYFFSDGIRLKKYRGMGSLDAMDKHLSSQNRYFSEADKIKVAQGVSGAVQDKGSIHKFVPYLIAGIQHSCQDIGAKSLTQVRAMMYSGELKFEKRTSSAQVEGGVHSLHSYEKRLF</sequence>
<organism>
    <name type="scientific">Homo sapiens</name>
    <name type="common">Human</name>
    <dbReference type="NCBI Taxonomy" id="9606"/>
    <lineage>
        <taxon>Eukaryota</taxon>
        <taxon>Metazoa</taxon>
        <taxon>Chordata</taxon>
        <taxon>Craniata</taxon>
        <taxon>Vertebrata</taxon>
        <taxon>Euteleostomi</taxon>
        <taxon>Mammalia</taxon>
        <taxon>Eutheria</taxon>
        <taxon>Euarchontoglires</taxon>
        <taxon>Primates</taxon>
        <taxon>Haplorrhini</taxon>
        <taxon>Catarrhini</taxon>
        <taxon>Hominidae</taxon>
        <taxon>Homo</taxon>
    </lineage>
</organism>
<reference key="1">
    <citation type="journal article" date="1988" name="J. Biol. Chem.">
        <title>Cloning and sequence analysis of the human and Chinese hamster inosine-5'-monophosphate dehydrogenase cDNAs.</title>
        <authorList>
            <person name="Collart F.R."/>
            <person name="Huberman E."/>
        </authorList>
    </citation>
    <scope>NUCLEOTIDE SEQUENCE [MRNA]</scope>
    <scope>PARTIAL PROTEIN SEQUENCE</scope>
</reference>
<reference key="2">
    <citation type="journal article" date="1990" name="J. Biol. Chem.">
        <title>Two distinct cDNAs for human IMP dehydrogenase.</title>
        <authorList>
            <person name="Natsumeda Y."/>
            <person name="Ohno S."/>
            <person name="Kawasaki H."/>
            <person name="Konno Y."/>
            <person name="Weber G."/>
            <person name="Suzuki K."/>
        </authorList>
    </citation>
    <scope>NUCLEOTIDE SEQUENCE [MRNA]</scope>
    <source>
        <tissue>Spleen</tissue>
    </source>
</reference>
<reference key="3">
    <citation type="journal article" date="1994" name="Biochem. Biophys. Res. Commun.">
        <title>Cloning and sequence of the human type II IMP dehydrogenase gene.</title>
        <authorList>
            <person name="Glesne D.A."/>
            <person name="Huberman E."/>
        </authorList>
    </citation>
    <scope>NUCLEOTIDE SEQUENCE [GENOMIC DNA]</scope>
    <source>
        <tissue>Blood</tissue>
    </source>
</reference>
<reference key="4">
    <citation type="journal article" date="1995" name="J. Biol. Chem.">
        <title>Characterization of the human inosine-5'-monophosphate dehydrogenase type II gene.</title>
        <authorList>
            <person name="Zimmermann A.G."/>
            <person name="Spychala J."/>
            <person name="Mitchell B.S."/>
        </authorList>
    </citation>
    <scope>NUCLEOTIDE SEQUENCE [GENOMIC DNA]</scope>
</reference>
<reference key="5">
    <citation type="journal article" date="2004" name="Genome Res.">
        <title>The status, quality, and expansion of the NIH full-length cDNA project: the Mammalian Gene Collection (MGC).</title>
        <authorList>
            <consortium name="The MGC Project Team"/>
        </authorList>
    </citation>
    <scope>NUCLEOTIDE SEQUENCE [LARGE SCALE MRNA]</scope>
    <source>
        <tissue>B-cell</tissue>
        <tissue>Colon</tissue>
        <tissue>Placenta</tissue>
    </source>
</reference>
<reference key="6">
    <citation type="journal article" date="1993" name="Genomics">
        <title>Chromosomal localization and structure of the human type II IMP dehydrogenase gene.</title>
        <authorList>
            <person name="Glesne D.A."/>
            <person name="Collart F.R."/>
            <person name="Varkony T."/>
            <person name="Drabkin H."/>
            <person name="Huberman E."/>
        </authorList>
    </citation>
    <scope>NUCLEOTIDE SEQUENCE [GENOMIC DNA] OF 461-514</scope>
</reference>
<reference key="7">
    <citation type="journal article" date="1993" name="J. Biol. Chem.">
        <title>Characterization of human type I and type II IMP dehydrogenases.</title>
        <authorList>
            <person name="Carr S.F."/>
            <person name="Papp E."/>
            <person name="Wu J.C."/>
            <person name="Natsumeda Y."/>
        </authorList>
    </citation>
    <scope>PROTEIN SEQUENCE OF 2-11</scope>
    <scope>BIOPHYSICOCHEMICAL PROPERTIES</scope>
    <scope>SUBUNIT</scope>
    <scope>ACTIVITY REGULATION</scope>
    <scope>CATALYTIC ACTIVITY</scope>
    <scope>FUNCTION</scope>
</reference>
<reference key="8">
    <citation type="journal article" date="1995" name="Biochem. Pharmacol.">
        <title>Recombinant human inosine monophosphate dehydrogenase type I and type II proteins. Purification and characterization of inhibitor binding.</title>
        <authorList>
            <person name="Hager P.W."/>
            <person name="Collart F.R."/>
            <person name="Huberman E."/>
            <person name="Mitchell B.S."/>
        </authorList>
    </citation>
    <scope>PROTEIN SEQUENCE OF N-TERMINUS</scope>
    <scope>BIOPHYSICOCHEMICAL PROPERTIES</scope>
    <scope>FUNCTION</scope>
    <scope>CATALYTIC ACTIVITY</scope>
</reference>
<reference key="9">
    <citation type="journal article" date="2003" name="Nature">
        <title>Proteomic characterization of the human centrosome by protein correlation profiling.</title>
        <authorList>
            <person name="Andersen J.S."/>
            <person name="Wilkinson C.J."/>
            <person name="Mayor T."/>
            <person name="Mortensen P."/>
            <person name="Nigg E.A."/>
            <person name="Mann M."/>
        </authorList>
    </citation>
    <scope>IDENTIFICATION BY MASS SPECTROMETRY</scope>
    <source>
        <tissue>Lymphoblast</tissue>
    </source>
</reference>
<reference key="10">
    <citation type="journal article" date="2004" name="Biochem. J.">
        <title>Inosine 5'-monophosphate dehydrogenase binds nucleic acids in vitro and in vivo.</title>
        <authorList>
            <person name="McLean J.E."/>
            <person name="Hamaguchi N."/>
            <person name="Belenky P."/>
            <person name="Mortimer S.E."/>
            <person name="Stanton M."/>
            <person name="Hedstrom L."/>
        </authorList>
    </citation>
    <scope>SUBCELLULAR LOCATION</scope>
    <scope>NUCLEIC ACID-BINDING</scope>
    <scope>FUNCTION</scope>
</reference>
<reference key="11">
    <citation type="journal article" date="2005" name="Nat. Biotechnol.">
        <title>Immunoaffinity profiling of tyrosine phosphorylation in cancer cells.</title>
        <authorList>
            <person name="Rush J."/>
            <person name="Moritz A."/>
            <person name="Lee K.A."/>
            <person name="Guo A."/>
            <person name="Goss V.L."/>
            <person name="Spek E.J."/>
            <person name="Zhang H."/>
            <person name="Zha X.-M."/>
            <person name="Polakiewicz R.D."/>
            <person name="Comb M.J."/>
        </authorList>
    </citation>
    <scope>PHOSPHORYLATION [LARGE SCALE ANALYSIS] AT TYR-400</scope>
    <scope>IDENTIFICATION BY MASS SPECTROMETRY [LARGE SCALE ANALYSIS]</scope>
</reference>
<reference key="12">
    <citation type="journal article" date="2006" name="Cell">
        <title>Global, in vivo, and site-specific phosphorylation dynamics in signaling networks.</title>
        <authorList>
            <person name="Olsen J.V."/>
            <person name="Blagoev B."/>
            <person name="Gnad F."/>
            <person name="Macek B."/>
            <person name="Kumar C."/>
            <person name="Mortensen P."/>
            <person name="Mann M."/>
        </authorList>
    </citation>
    <scope>IDENTIFICATION BY MASS SPECTROMETRY [LARGE SCALE ANALYSIS]</scope>
    <source>
        <tissue>Cervix carcinoma</tissue>
    </source>
</reference>
<reference key="13">
    <citation type="journal article" date="2007" name="Pharmacogenet. Genomics">
        <title>A novel variant L263F in human inosine 5'-monophosphate dehydrogenase 2 is associated with diminished enzyme activity.</title>
        <authorList>
            <person name="Wang J."/>
            <person name="Zeevi A."/>
            <person name="Webber S."/>
            <person name="Girnita D.M."/>
            <person name="Addonizio L."/>
            <person name="Selby R."/>
            <person name="Hutchinson I.V."/>
            <person name="Burckart G.J."/>
        </authorList>
    </citation>
    <scope>POLYMORPHISM</scope>
    <scope>VARIANT PHE-263</scope>
</reference>
<reference key="14">
    <citation type="journal article" date="2008" name="Proc. Natl. Acad. Sci. U.S.A.">
        <title>A quantitative atlas of mitotic phosphorylation.</title>
        <authorList>
            <person name="Dephoure N."/>
            <person name="Zhou C."/>
            <person name="Villen J."/>
            <person name="Beausoleil S.A."/>
            <person name="Bakalarski C.E."/>
            <person name="Elledge S.J."/>
            <person name="Gygi S.P."/>
        </authorList>
    </citation>
    <scope>PHOSPHORYLATION [LARGE SCALE ANALYSIS] AT SER-122</scope>
    <scope>IDENTIFICATION BY MASS SPECTROMETRY [LARGE SCALE ANALYSIS]</scope>
    <source>
        <tissue>Cervix carcinoma</tissue>
    </source>
</reference>
<reference key="15">
    <citation type="journal article" date="2009" name="Anal. Chem.">
        <title>Lys-N and trypsin cover complementary parts of the phosphoproteome in a refined SCX-based approach.</title>
        <authorList>
            <person name="Gauci S."/>
            <person name="Helbig A.O."/>
            <person name="Slijper M."/>
            <person name="Krijgsveld J."/>
            <person name="Heck A.J."/>
            <person name="Mohammed S."/>
        </authorList>
    </citation>
    <scope>IDENTIFICATION BY MASS SPECTROMETRY [LARGE SCALE ANALYSIS]</scope>
</reference>
<reference key="16">
    <citation type="journal article" date="2009" name="Science">
        <title>Lysine acetylation targets protein complexes and co-regulates major cellular functions.</title>
        <authorList>
            <person name="Choudhary C."/>
            <person name="Kumar C."/>
            <person name="Gnad F."/>
            <person name="Nielsen M.L."/>
            <person name="Rehman M."/>
            <person name="Walther T.C."/>
            <person name="Olsen J.V."/>
            <person name="Mann M."/>
        </authorList>
    </citation>
    <scope>ACETYLATION [LARGE SCALE ANALYSIS] AT LYS-511</scope>
    <scope>IDENTIFICATION BY MASS SPECTROMETRY [LARGE SCALE ANALYSIS]</scope>
</reference>
<reference key="17">
    <citation type="journal article" date="2010" name="Sci. Signal.">
        <title>Quantitative phosphoproteomics reveals widespread full phosphorylation site occupancy during mitosis.</title>
        <authorList>
            <person name="Olsen J.V."/>
            <person name="Vermeulen M."/>
            <person name="Santamaria A."/>
            <person name="Kumar C."/>
            <person name="Miller M.L."/>
            <person name="Jensen L.J."/>
            <person name="Gnad F."/>
            <person name="Cox J."/>
            <person name="Jensen T.S."/>
            <person name="Nigg E.A."/>
            <person name="Brunak S."/>
            <person name="Mann M."/>
        </authorList>
    </citation>
    <scope>PHOSPHORYLATION [LARGE SCALE ANALYSIS] AT SER-122 AND SER-416</scope>
    <scope>IDENTIFICATION BY MASS SPECTROMETRY [LARGE SCALE ANALYSIS]</scope>
    <source>
        <tissue>Cervix carcinoma</tissue>
    </source>
</reference>
<reference key="18">
    <citation type="journal article" date="2011" name="BMC Syst. Biol.">
        <title>Initial characterization of the human central proteome.</title>
        <authorList>
            <person name="Burkard T.R."/>
            <person name="Planyavsky M."/>
            <person name="Kaupe I."/>
            <person name="Breitwieser F.P."/>
            <person name="Buerckstuemmer T."/>
            <person name="Bennett K.L."/>
            <person name="Superti-Furga G."/>
            <person name="Colinge J."/>
        </authorList>
    </citation>
    <scope>IDENTIFICATION BY MASS SPECTROMETRY [LARGE SCALE ANALYSIS]</scope>
</reference>
<reference key="19">
    <citation type="journal article" date="2013" name="J. Proteome Res.">
        <title>Toward a comprehensive characterization of a human cancer cell phosphoproteome.</title>
        <authorList>
            <person name="Zhou H."/>
            <person name="Di Palma S."/>
            <person name="Preisinger C."/>
            <person name="Peng M."/>
            <person name="Polat A.N."/>
            <person name="Heck A.J."/>
            <person name="Mohammed S."/>
        </authorList>
    </citation>
    <scope>PHOSPHORYLATION [LARGE SCALE ANALYSIS] AT SER-122; SER-160 AND SER-416</scope>
    <scope>IDENTIFICATION BY MASS SPECTROMETRY [LARGE SCALE ANALYSIS]</scope>
    <source>
        <tissue>Cervix carcinoma</tissue>
        <tissue>Erythroleukemia</tissue>
    </source>
</reference>
<reference key="20">
    <citation type="journal article" date="2014" name="J. Proteomics">
        <title>An enzyme assisted RP-RPLC approach for in-depth analysis of human liver phosphoproteome.</title>
        <authorList>
            <person name="Bian Y."/>
            <person name="Song C."/>
            <person name="Cheng K."/>
            <person name="Dong M."/>
            <person name="Wang F."/>
            <person name="Huang J."/>
            <person name="Sun D."/>
            <person name="Wang L."/>
            <person name="Ye M."/>
            <person name="Zou H."/>
        </authorList>
    </citation>
    <scope>PHOSPHORYLATION [LARGE SCALE ANALYSIS] AT SER-416</scope>
    <scope>IDENTIFICATION BY MASS SPECTROMETRY [LARGE SCALE ANALYSIS]</scope>
    <source>
        <tissue>Liver</tissue>
    </source>
</reference>
<reference key="21">
    <citation type="journal article" date="2015" name="Proteomics">
        <title>N-terminome analysis of the human mitochondrial proteome.</title>
        <authorList>
            <person name="Vaca Jacome A.S."/>
            <person name="Rabilloud T."/>
            <person name="Schaeffer-Reiss C."/>
            <person name="Rompais M."/>
            <person name="Ayoub D."/>
            <person name="Lane L."/>
            <person name="Bairoch A."/>
            <person name="Van Dorsselaer A."/>
            <person name="Carapito C."/>
        </authorList>
    </citation>
    <scope>IDENTIFICATION BY MASS SPECTROMETRY [LARGE SCALE ANALYSIS]</scope>
</reference>
<reference key="22">
    <citation type="journal article" date="2017" name="Mol. Cell">
        <title>CLOCK acetylates ASS1 to drive circadian rhythm of ureagenesis.</title>
        <authorList>
            <person name="Lin R."/>
            <person name="Mo Y."/>
            <person name="Zha H."/>
            <person name="Qu Z."/>
            <person name="Xie P."/>
            <person name="Zhu Z.J."/>
            <person name="Xu Y."/>
            <person name="Xiong Y."/>
            <person name="Guan K.L."/>
        </authorList>
    </citation>
    <scope>ACETYLATION</scope>
    <scope>INTERACTION WITH CLOCK</scope>
</reference>
<reference key="23">
    <citation type="journal article" date="2014" name="Cell. Mol. Life Sci.">
        <title>Glutamine deprivation initiates reversible assembly of mammalian rods and rings.</title>
        <authorList>
            <person name="Calise S.J."/>
            <person name="Carcamo W.C."/>
            <person name="Krueger C."/>
            <person name="Yin J.D."/>
            <person name="Purich D.L."/>
            <person name="Chan E.K."/>
        </authorList>
    </citation>
    <scope>SUBCELLULAR LOCATION</scope>
</reference>
<reference key="24">
    <citation type="journal article" date="2018" name="Biochim. Biophys. Acta">
        <title>ANKRD9 is associated with tumor suppression as a substrate receptor subunit of ubiquitin ligase.</title>
        <authorList>
            <person name="Lee Y."/>
            <person name="Lim B."/>
            <person name="Lee S.W."/>
            <person name="Lee W.R."/>
            <person name="Kim Y.I."/>
            <person name="Kim M."/>
            <person name="Ju H."/>
            <person name="Kim M.Y."/>
            <person name="Kang S.J."/>
            <person name="Song J.J."/>
            <person name="Lee J.E."/>
            <person name="Kang C."/>
        </authorList>
    </citation>
    <scope>UBIQUITINATION</scope>
    <scope>INTERACTION WITH ANKRD9</scope>
</reference>
<reference key="25">
    <citation type="journal article" date="2019" name="J. Biol. Chem.">
        <title>ANKRD9 is a metabolically-controlled regulator of IMPDH2 abundance and macro-assembly.</title>
        <authorList>
            <person name="Hayward D."/>
            <person name="Kouznetsova V.L."/>
            <person name="Pierson H.E."/>
            <person name="Hasan N.M."/>
            <person name="Guzman E.R."/>
            <person name="Tsigelny I.F."/>
            <person name="Lutsenko S."/>
        </authorList>
    </citation>
    <scope>SUBCELLULAR LOCATION</scope>
</reference>
<reference key="26">
    <citation type="journal article" date="2017" name="Nat. Struct. Mol. Biol.">
        <title>Site-specific mapping of the human SUMO proteome reveals co-modification with phosphorylation.</title>
        <authorList>
            <person name="Hendriks I.A."/>
            <person name="Lyon D."/>
            <person name="Young C."/>
            <person name="Jensen L.J."/>
            <person name="Vertegaal A.C."/>
            <person name="Nielsen M.L."/>
        </authorList>
    </citation>
    <scope>SUMOYLATION [LARGE SCALE ANALYSIS] AT LYS-195; LYS-208 AND LYS-438</scope>
    <scope>IDENTIFICATION BY MASS SPECTROMETRY [LARGE SCALE ANALYSIS]</scope>
</reference>
<reference key="27">
    <citation type="journal article" date="1999" name="Proc. Natl. Acad. Sci. U.S.A.">
        <title>Crystal structure of human type II inosine monophosphate dehydrogenase: implications for ligand binding and drug design.</title>
        <authorList>
            <person name="Colby T.D."/>
            <person name="Vanderveen K."/>
            <person name="Strickler M.D."/>
            <person name="Markham G.D."/>
            <person name="Goldstein B.M."/>
        </authorList>
    </citation>
    <scope>X-RAY CRYSTALLOGRAPHY (2.9 ANGSTROMS)</scope>
    <scope>ACTIVE SITE</scope>
</reference>
<reference key="28">
    <citation type="submission" date="2002-12" db="PDB data bank">
        <title>Crystal structure of human inosine monophosphate dehydrogenase type II complexed with the MPA/NAD analog C2-MAD.</title>
        <authorList>
            <person name="Risal D."/>
            <person name="Strickler M.D."/>
            <person name="Goldstein B.M."/>
        </authorList>
    </citation>
    <scope>X-RAY CRYSTALLOGRAPHY (2.65 ANGSTROMS) IN COMPLEX WITH INHIBITOR AND POTASSIUM</scope>
</reference>
<reference key="29">
    <citation type="submission" date="2002-12" db="PDB data bank">
        <title>The conformation of NAD bound to human inosine monophosphate Dehydrogenase Type II.</title>
        <authorList>
            <person name="Risal D."/>
            <person name="Strickler M.D."/>
            <person name="Goldstein B.M."/>
        </authorList>
    </citation>
    <scope>X-RAY CRYSTALLOGRAPHY (2.90 ANGSTROMS) IN COMPLEX WITH NAD(+)</scope>
</reference>
<gene>
    <name evidence="16" type="primary">IMPDH2</name>
    <name type="synonym">IMPD2</name>
</gene>